<comment type="function">
    <text evidence="1">Plays an essential role in the initiation and regulation of chromosomal replication. ATP-DnaA binds to the origin of replication (oriC) to initiate formation of the DNA replication initiation complex once per cell cycle. Binds the DnaA box (a 9 base pair repeat at the origin) and separates the double-stranded (ds)DNA. Forms a right-handed helical filament on oriC DNA; dsDNA binds to the exterior of the filament while single-stranded (ss)DNA is stabiized in the filament's interior. The ATP-DnaA-oriC complex binds and stabilizes one strand of the AT-rich DNA unwinding element (DUE), permitting loading of DNA polymerase. After initiation quickly degrades to an ADP-DnaA complex that is not apt for DNA replication. Binds acidic phospholipids.</text>
</comment>
<comment type="subunit">
    <text evidence="1">Oligomerizes as a right-handed, spiral filament on DNA at oriC.</text>
</comment>
<comment type="subcellular location">
    <subcellularLocation>
        <location evidence="1">Cytoplasm</location>
    </subcellularLocation>
</comment>
<comment type="domain">
    <text evidence="1">Domain I is involved in oligomerization and binding regulators, domain II is flexibile and of varying length in different bacteria, domain III forms the AAA+ region, while domain IV binds dsDNA.</text>
</comment>
<comment type="similarity">
    <text evidence="1">Belongs to the DnaA family.</text>
</comment>
<name>DNAA_BURM7</name>
<gene>
    <name evidence="1" type="primary">dnaA</name>
    <name type="ordered locus">BMA10247_0001</name>
</gene>
<keyword id="KW-0067">ATP-binding</keyword>
<keyword id="KW-0963">Cytoplasm</keyword>
<keyword id="KW-0235">DNA replication</keyword>
<keyword id="KW-0238">DNA-binding</keyword>
<keyword id="KW-0446">Lipid-binding</keyword>
<keyword id="KW-0547">Nucleotide-binding</keyword>
<organism>
    <name type="scientific">Burkholderia mallei (strain NCTC 10247)</name>
    <dbReference type="NCBI Taxonomy" id="320389"/>
    <lineage>
        <taxon>Bacteria</taxon>
        <taxon>Pseudomonadati</taxon>
        <taxon>Pseudomonadota</taxon>
        <taxon>Betaproteobacteria</taxon>
        <taxon>Burkholderiales</taxon>
        <taxon>Burkholderiaceae</taxon>
        <taxon>Burkholderia</taxon>
        <taxon>pseudomallei group</taxon>
    </lineage>
</organism>
<dbReference type="EMBL" id="CP000548">
    <property type="protein sequence ID" value="ABO05026.1"/>
    <property type="molecule type" value="Genomic_DNA"/>
</dbReference>
<dbReference type="RefSeq" id="WP_004203399.1">
    <property type="nucleotide sequence ID" value="NZ_CP007802.1"/>
</dbReference>
<dbReference type="SMR" id="A3MH48"/>
<dbReference type="KEGG" id="bmaz:BM44_2966"/>
<dbReference type="KEGG" id="bmn:BMA10247_0001"/>
<dbReference type="PATRIC" id="fig|320389.8.peg.3343"/>
<dbReference type="GO" id="GO:0005737">
    <property type="term" value="C:cytoplasm"/>
    <property type="evidence" value="ECO:0007669"/>
    <property type="project" value="UniProtKB-SubCell"/>
</dbReference>
<dbReference type="GO" id="GO:0005886">
    <property type="term" value="C:plasma membrane"/>
    <property type="evidence" value="ECO:0007669"/>
    <property type="project" value="TreeGrafter"/>
</dbReference>
<dbReference type="GO" id="GO:0005524">
    <property type="term" value="F:ATP binding"/>
    <property type="evidence" value="ECO:0007669"/>
    <property type="project" value="UniProtKB-UniRule"/>
</dbReference>
<dbReference type="GO" id="GO:0016887">
    <property type="term" value="F:ATP hydrolysis activity"/>
    <property type="evidence" value="ECO:0007669"/>
    <property type="project" value="InterPro"/>
</dbReference>
<dbReference type="GO" id="GO:0003688">
    <property type="term" value="F:DNA replication origin binding"/>
    <property type="evidence" value="ECO:0007669"/>
    <property type="project" value="UniProtKB-UniRule"/>
</dbReference>
<dbReference type="GO" id="GO:0008289">
    <property type="term" value="F:lipid binding"/>
    <property type="evidence" value="ECO:0007669"/>
    <property type="project" value="UniProtKB-KW"/>
</dbReference>
<dbReference type="GO" id="GO:0006270">
    <property type="term" value="P:DNA replication initiation"/>
    <property type="evidence" value="ECO:0007669"/>
    <property type="project" value="UniProtKB-UniRule"/>
</dbReference>
<dbReference type="GO" id="GO:0006275">
    <property type="term" value="P:regulation of DNA replication"/>
    <property type="evidence" value="ECO:0007669"/>
    <property type="project" value="UniProtKB-UniRule"/>
</dbReference>
<dbReference type="CDD" id="cd00009">
    <property type="entry name" value="AAA"/>
    <property type="match status" value="1"/>
</dbReference>
<dbReference type="CDD" id="cd06571">
    <property type="entry name" value="Bac_DnaA_C"/>
    <property type="match status" value="1"/>
</dbReference>
<dbReference type="FunFam" id="1.10.8.60:FF:000003">
    <property type="entry name" value="Chromosomal replication initiator protein DnaA"/>
    <property type="match status" value="1"/>
</dbReference>
<dbReference type="FunFam" id="3.40.50.300:FF:000668">
    <property type="entry name" value="Chromosomal replication initiator protein DnaA"/>
    <property type="match status" value="1"/>
</dbReference>
<dbReference type="Gene3D" id="1.10.1750.10">
    <property type="match status" value="1"/>
</dbReference>
<dbReference type="Gene3D" id="1.10.8.60">
    <property type="match status" value="1"/>
</dbReference>
<dbReference type="Gene3D" id="3.30.300.180">
    <property type="match status" value="1"/>
</dbReference>
<dbReference type="Gene3D" id="3.40.50.300">
    <property type="entry name" value="P-loop containing nucleotide triphosphate hydrolases"/>
    <property type="match status" value="1"/>
</dbReference>
<dbReference type="HAMAP" id="MF_00377">
    <property type="entry name" value="DnaA_bact"/>
    <property type="match status" value="1"/>
</dbReference>
<dbReference type="InterPro" id="IPR003593">
    <property type="entry name" value="AAA+_ATPase"/>
</dbReference>
<dbReference type="InterPro" id="IPR001957">
    <property type="entry name" value="Chromosome_initiator_DnaA"/>
</dbReference>
<dbReference type="InterPro" id="IPR020591">
    <property type="entry name" value="Chromosome_initiator_DnaA-like"/>
</dbReference>
<dbReference type="InterPro" id="IPR018312">
    <property type="entry name" value="Chromosome_initiator_DnaA_CS"/>
</dbReference>
<dbReference type="InterPro" id="IPR013159">
    <property type="entry name" value="DnaA_C"/>
</dbReference>
<dbReference type="InterPro" id="IPR013317">
    <property type="entry name" value="DnaA_dom"/>
</dbReference>
<dbReference type="InterPro" id="IPR024633">
    <property type="entry name" value="DnaA_N_dom"/>
</dbReference>
<dbReference type="InterPro" id="IPR038454">
    <property type="entry name" value="DnaA_N_sf"/>
</dbReference>
<dbReference type="InterPro" id="IPR055199">
    <property type="entry name" value="Hda_lid"/>
</dbReference>
<dbReference type="InterPro" id="IPR027417">
    <property type="entry name" value="P-loop_NTPase"/>
</dbReference>
<dbReference type="InterPro" id="IPR010921">
    <property type="entry name" value="Trp_repressor/repl_initiator"/>
</dbReference>
<dbReference type="NCBIfam" id="TIGR00362">
    <property type="entry name" value="DnaA"/>
    <property type="match status" value="1"/>
</dbReference>
<dbReference type="PANTHER" id="PTHR30050">
    <property type="entry name" value="CHROMOSOMAL REPLICATION INITIATOR PROTEIN DNAA"/>
    <property type="match status" value="1"/>
</dbReference>
<dbReference type="PANTHER" id="PTHR30050:SF2">
    <property type="entry name" value="CHROMOSOMAL REPLICATION INITIATOR PROTEIN DNAA"/>
    <property type="match status" value="1"/>
</dbReference>
<dbReference type="Pfam" id="PF00308">
    <property type="entry name" value="Bac_DnaA"/>
    <property type="match status" value="1"/>
</dbReference>
<dbReference type="Pfam" id="PF08299">
    <property type="entry name" value="Bac_DnaA_C"/>
    <property type="match status" value="1"/>
</dbReference>
<dbReference type="Pfam" id="PF11638">
    <property type="entry name" value="DnaA_N"/>
    <property type="match status" value="1"/>
</dbReference>
<dbReference type="Pfam" id="PF22688">
    <property type="entry name" value="Hda_lid"/>
    <property type="match status" value="1"/>
</dbReference>
<dbReference type="PRINTS" id="PR00051">
    <property type="entry name" value="DNAA"/>
</dbReference>
<dbReference type="SMART" id="SM00382">
    <property type="entry name" value="AAA"/>
    <property type="match status" value="1"/>
</dbReference>
<dbReference type="SMART" id="SM00760">
    <property type="entry name" value="Bac_DnaA_C"/>
    <property type="match status" value="1"/>
</dbReference>
<dbReference type="SUPFAM" id="SSF52540">
    <property type="entry name" value="P-loop containing nucleoside triphosphate hydrolases"/>
    <property type="match status" value="1"/>
</dbReference>
<dbReference type="SUPFAM" id="SSF48295">
    <property type="entry name" value="TrpR-like"/>
    <property type="match status" value="1"/>
</dbReference>
<dbReference type="PROSITE" id="PS01008">
    <property type="entry name" value="DNAA"/>
    <property type="match status" value="1"/>
</dbReference>
<protein>
    <recommendedName>
        <fullName evidence="1">Chromosomal replication initiator protein DnaA</fullName>
    </recommendedName>
</protein>
<proteinExistence type="inferred from homology"/>
<feature type="chain" id="PRO_1000048615" description="Chromosomal replication initiator protein DnaA">
    <location>
        <begin position="1"/>
        <end position="533"/>
    </location>
</feature>
<feature type="region of interest" description="Domain I, interacts with DnaA modulators" evidence="1">
    <location>
        <begin position="1"/>
        <end position="72"/>
    </location>
</feature>
<feature type="region of interest" description="Domain II" evidence="1">
    <location>
        <begin position="72"/>
        <end position="196"/>
    </location>
</feature>
<feature type="region of interest" description="Disordered" evidence="2">
    <location>
        <begin position="83"/>
        <end position="110"/>
    </location>
</feature>
<feature type="region of interest" description="Domain III, AAA+ region" evidence="1">
    <location>
        <begin position="197"/>
        <end position="413"/>
    </location>
</feature>
<feature type="region of interest" description="Domain IV, binds dsDNA" evidence="1">
    <location>
        <begin position="414"/>
        <end position="533"/>
    </location>
</feature>
<feature type="compositionally biased region" description="Pro residues" evidence="2">
    <location>
        <begin position="96"/>
        <end position="110"/>
    </location>
</feature>
<feature type="binding site" evidence="1">
    <location>
        <position position="241"/>
    </location>
    <ligand>
        <name>ATP</name>
        <dbReference type="ChEBI" id="CHEBI:30616"/>
    </ligand>
</feature>
<feature type="binding site" evidence="1">
    <location>
        <position position="243"/>
    </location>
    <ligand>
        <name>ATP</name>
        <dbReference type="ChEBI" id="CHEBI:30616"/>
    </ligand>
</feature>
<feature type="binding site" evidence="1">
    <location>
        <position position="244"/>
    </location>
    <ligand>
        <name>ATP</name>
        <dbReference type="ChEBI" id="CHEBI:30616"/>
    </ligand>
</feature>
<feature type="binding site" evidence="1">
    <location>
        <position position="245"/>
    </location>
    <ligand>
        <name>ATP</name>
        <dbReference type="ChEBI" id="CHEBI:30616"/>
    </ligand>
</feature>
<reference key="1">
    <citation type="journal article" date="2010" name="Genome Biol. Evol.">
        <title>Continuing evolution of Burkholderia mallei through genome reduction and large-scale rearrangements.</title>
        <authorList>
            <person name="Losada L."/>
            <person name="Ronning C.M."/>
            <person name="DeShazer D."/>
            <person name="Woods D."/>
            <person name="Fedorova N."/>
            <person name="Kim H.S."/>
            <person name="Shabalina S.A."/>
            <person name="Pearson T.R."/>
            <person name="Brinkac L."/>
            <person name="Tan P."/>
            <person name="Nandi T."/>
            <person name="Crabtree J."/>
            <person name="Badger J."/>
            <person name="Beckstrom-Sternberg S."/>
            <person name="Saqib M."/>
            <person name="Schutzer S.E."/>
            <person name="Keim P."/>
            <person name="Nierman W.C."/>
        </authorList>
    </citation>
    <scope>NUCLEOTIDE SEQUENCE [LARGE SCALE GENOMIC DNA]</scope>
    <source>
        <strain>NCTC 10247</strain>
    </source>
</reference>
<accession>A3MH48</accession>
<sequence>MNDFWQHCSALLERELTPQQYVTWIKPLAPVAFDAAANTLSIAAPNRFKLDWVKSQFSGRISDLARDFWNAPIEVQFVLDPKAGQRSPAGATPLAPRAPLPSANPAPVGPGPACAPAVDAHAPAPAGMNAATAAAVAAAQAAQAAQANAAALNADEAADLDLPSLTAHEAAAGRRTWRPGAANANSEAADSMYERSKLNPVLTFDNFVTGKANQLARAAAIQVADNPGISYNPLFLYGGVGLGKTHLIHAIGNQLLLDKPGARIRYIHAEQYVSDVVKAYQRKAFDDFKRYYHSLDLLLIDDIQFFSGKSRTQEEFFYAFEALVANKAQVIITSDTYPKEISGIDDRLISRFDSGLTVAIEPPELEMRVAILMRKAQSEGVSLSEDVAFFVAKHLRSNVRELEGALRKILAYSKFHGREITIELTKEALKDLLTVQNRQISVENIQKTVADFYNIKVADMYSKKRPANIARPRQIAMYLAKELTQKSLPEIGELFGGRDHTTVLHAVRKIADERGKDAQLNHELHVLEQTLKG</sequence>
<evidence type="ECO:0000255" key="1">
    <source>
        <dbReference type="HAMAP-Rule" id="MF_00377"/>
    </source>
</evidence>
<evidence type="ECO:0000256" key="2">
    <source>
        <dbReference type="SAM" id="MobiDB-lite"/>
    </source>
</evidence>